<dbReference type="EMBL" id="CP000800">
    <property type="protein sequence ID" value="ABV18113.1"/>
    <property type="molecule type" value="Genomic_DNA"/>
</dbReference>
<dbReference type="RefSeq" id="WP_000074172.1">
    <property type="nucleotide sequence ID" value="NC_009801.1"/>
</dbReference>
<dbReference type="SMR" id="A7ZKF6"/>
<dbReference type="GeneID" id="75203640"/>
<dbReference type="KEGG" id="ecw:EcE24377A_1174"/>
<dbReference type="HOGENOM" id="CLU_001265_57_3_6"/>
<dbReference type="Proteomes" id="UP000001122">
    <property type="component" value="Chromosome"/>
</dbReference>
<dbReference type="GO" id="GO:0005886">
    <property type="term" value="C:plasma membrane"/>
    <property type="evidence" value="ECO:0007669"/>
    <property type="project" value="UniProtKB-SubCell"/>
</dbReference>
<dbReference type="GO" id="GO:0022857">
    <property type="term" value="F:transmembrane transporter activity"/>
    <property type="evidence" value="ECO:0007669"/>
    <property type="project" value="UniProtKB-UniRule"/>
</dbReference>
<dbReference type="GO" id="GO:0046677">
    <property type="term" value="P:response to antibiotic"/>
    <property type="evidence" value="ECO:0007669"/>
    <property type="project" value="UniProtKB-KW"/>
</dbReference>
<dbReference type="CDD" id="cd17391">
    <property type="entry name" value="MFS_MdtG_MDR_like"/>
    <property type="match status" value="1"/>
</dbReference>
<dbReference type="FunFam" id="1.20.1250.20:FF:000020">
    <property type="entry name" value="Multidrug resistance protein MdtG"/>
    <property type="match status" value="1"/>
</dbReference>
<dbReference type="FunFam" id="1.20.1250.20:FF:000022">
    <property type="entry name" value="Multidrug resistance protein MdtG"/>
    <property type="match status" value="1"/>
</dbReference>
<dbReference type="Gene3D" id="1.20.1250.20">
    <property type="entry name" value="MFS general substrate transporter like domains"/>
    <property type="match status" value="2"/>
</dbReference>
<dbReference type="HAMAP" id="MF_01528">
    <property type="entry name" value="MFS_MdtG"/>
    <property type="match status" value="1"/>
</dbReference>
<dbReference type="InterPro" id="IPR011701">
    <property type="entry name" value="MFS"/>
</dbReference>
<dbReference type="InterPro" id="IPR020846">
    <property type="entry name" value="MFS_dom"/>
</dbReference>
<dbReference type="InterPro" id="IPR050497">
    <property type="entry name" value="MFS_MdtG_subfamily"/>
</dbReference>
<dbReference type="InterPro" id="IPR036259">
    <property type="entry name" value="MFS_trans_sf"/>
</dbReference>
<dbReference type="InterPro" id="IPR023692">
    <property type="entry name" value="Mutidrug-R_MdtG"/>
</dbReference>
<dbReference type="InterPro" id="IPR001958">
    <property type="entry name" value="Tet-R_TetA/multi-R_MdtG-like"/>
</dbReference>
<dbReference type="NCBIfam" id="NF007372">
    <property type="entry name" value="PRK09874.1"/>
    <property type="match status" value="1"/>
</dbReference>
<dbReference type="PANTHER" id="PTHR43414">
    <property type="entry name" value="MULTIDRUG RESISTANCE PROTEIN MDTG"/>
    <property type="match status" value="1"/>
</dbReference>
<dbReference type="PANTHER" id="PTHR43414:SF6">
    <property type="entry name" value="MULTIDRUG RESISTANCE PROTEIN MDTG"/>
    <property type="match status" value="1"/>
</dbReference>
<dbReference type="Pfam" id="PF07690">
    <property type="entry name" value="MFS_1"/>
    <property type="match status" value="1"/>
</dbReference>
<dbReference type="PRINTS" id="PR01035">
    <property type="entry name" value="TCRTETA"/>
</dbReference>
<dbReference type="SUPFAM" id="SSF103473">
    <property type="entry name" value="MFS general substrate transporter"/>
    <property type="match status" value="1"/>
</dbReference>
<dbReference type="PROSITE" id="PS50850">
    <property type="entry name" value="MFS"/>
    <property type="match status" value="1"/>
</dbReference>
<feature type="chain" id="PRO_1000068674" description="Multidrug resistance protein MdtG">
    <location>
        <begin position="1"/>
        <end position="408"/>
    </location>
</feature>
<feature type="transmembrane region" description="Helical" evidence="1">
    <location>
        <begin position="16"/>
        <end position="36"/>
    </location>
</feature>
<feature type="transmembrane region" description="Helical" evidence="1">
    <location>
        <begin position="58"/>
        <end position="78"/>
    </location>
</feature>
<feature type="transmembrane region" description="Helical" evidence="1">
    <location>
        <begin position="92"/>
        <end position="112"/>
    </location>
</feature>
<feature type="transmembrane region" description="Helical" evidence="1">
    <location>
        <begin position="115"/>
        <end position="135"/>
    </location>
</feature>
<feature type="transmembrane region" description="Helical" evidence="1">
    <location>
        <begin position="146"/>
        <end position="166"/>
    </location>
</feature>
<feature type="transmembrane region" description="Helical" evidence="1">
    <location>
        <begin position="173"/>
        <end position="193"/>
    </location>
</feature>
<feature type="transmembrane region" description="Helical" evidence="1">
    <location>
        <begin position="224"/>
        <end position="244"/>
    </location>
</feature>
<feature type="transmembrane region" description="Helical" evidence="1">
    <location>
        <begin position="256"/>
        <end position="276"/>
    </location>
</feature>
<feature type="transmembrane region" description="Helical" evidence="1">
    <location>
        <begin position="290"/>
        <end position="310"/>
    </location>
</feature>
<feature type="transmembrane region" description="Helical" evidence="1">
    <location>
        <begin position="319"/>
        <end position="339"/>
    </location>
</feature>
<feature type="transmembrane region" description="Helical" evidence="1">
    <location>
        <begin position="378"/>
        <end position="398"/>
    </location>
</feature>
<proteinExistence type="inferred from homology"/>
<name>MDTG_ECO24</name>
<reference key="1">
    <citation type="journal article" date="2008" name="J. Bacteriol.">
        <title>The pangenome structure of Escherichia coli: comparative genomic analysis of E. coli commensal and pathogenic isolates.</title>
        <authorList>
            <person name="Rasko D.A."/>
            <person name="Rosovitz M.J."/>
            <person name="Myers G.S.A."/>
            <person name="Mongodin E.F."/>
            <person name="Fricke W.F."/>
            <person name="Gajer P."/>
            <person name="Crabtree J."/>
            <person name="Sebaihia M."/>
            <person name="Thomson N.R."/>
            <person name="Chaudhuri R."/>
            <person name="Henderson I.R."/>
            <person name="Sperandio V."/>
            <person name="Ravel J."/>
        </authorList>
    </citation>
    <scope>NUCLEOTIDE SEQUENCE [LARGE SCALE GENOMIC DNA]</scope>
    <source>
        <strain>E24377A / ETEC</strain>
    </source>
</reference>
<sequence length="408" mass="43867">MSPCENDTPINWKRNLIVAWLGCFLTGAAFSLVMPFLPLYVEQLGVTGHSALNMWSGIVFSITFLFSAIASPFWGGLADRKGRKLMLLRSALGMGIVMVLMGLAQNIWQFLILRALLGLLGGFVPNANALIATQVPRNKSGWALGTLSTGGVSGALLGPMAGGLLADSYGLRPVFFITASVLILCFFVTLFCIREKFQPVSKKEMLHMREVVTSLKNPKLVLSLFVTTLIIQVATGSIAPILTLYVRELAGNVSNVAFISGMIASVPGVAALLSAPRLGKLGDRIGPEKILITALIFSVLLLIPMSYVQTPLQLGILRFLLGAADGALLPAVQTLLVYNSSNQIAGRIFSYNQSFRDIGNVTGPLMGAAISANYGFRAVFLVTAGVVLFNAVYSWNSLRRRRIPQVSN</sequence>
<evidence type="ECO:0000255" key="1">
    <source>
        <dbReference type="HAMAP-Rule" id="MF_01528"/>
    </source>
</evidence>
<keyword id="KW-0046">Antibiotic resistance</keyword>
<keyword id="KW-0997">Cell inner membrane</keyword>
<keyword id="KW-1003">Cell membrane</keyword>
<keyword id="KW-0472">Membrane</keyword>
<keyword id="KW-1185">Reference proteome</keyword>
<keyword id="KW-0812">Transmembrane</keyword>
<keyword id="KW-1133">Transmembrane helix</keyword>
<keyword id="KW-0813">Transport</keyword>
<comment type="function">
    <text evidence="1">Confers resistance to fosfomycin and deoxycholate.</text>
</comment>
<comment type="subcellular location">
    <subcellularLocation>
        <location evidence="1">Cell inner membrane</location>
        <topology evidence="1">Multi-pass membrane protein</topology>
    </subcellularLocation>
</comment>
<comment type="similarity">
    <text evidence="1">Belongs to the major facilitator superfamily. DHA1 family. MdtG (TC 2.A.1.2.20) subfamily.</text>
</comment>
<gene>
    <name evidence="1" type="primary">mdtG</name>
    <name type="ordered locus">EcE24377A_1174</name>
</gene>
<accession>A7ZKF6</accession>
<organism>
    <name type="scientific">Escherichia coli O139:H28 (strain E24377A / ETEC)</name>
    <dbReference type="NCBI Taxonomy" id="331111"/>
    <lineage>
        <taxon>Bacteria</taxon>
        <taxon>Pseudomonadati</taxon>
        <taxon>Pseudomonadota</taxon>
        <taxon>Gammaproteobacteria</taxon>
        <taxon>Enterobacterales</taxon>
        <taxon>Enterobacteriaceae</taxon>
        <taxon>Escherichia</taxon>
    </lineage>
</organism>
<protein>
    <recommendedName>
        <fullName evidence="1">Multidrug resistance protein MdtG</fullName>
    </recommendedName>
</protein>